<proteinExistence type="inferred from homology"/>
<gene>
    <name type="primary">skp</name>
    <name type="ordered locus">plu0681</name>
</gene>
<reference key="1">
    <citation type="journal article" date="2003" name="Nat. Biotechnol.">
        <title>The genome sequence of the entomopathogenic bacterium Photorhabdus luminescens.</title>
        <authorList>
            <person name="Duchaud E."/>
            <person name="Rusniok C."/>
            <person name="Frangeul L."/>
            <person name="Buchrieser C."/>
            <person name="Givaudan A."/>
            <person name="Taourit S."/>
            <person name="Bocs S."/>
            <person name="Boursaux-Eude C."/>
            <person name="Chandler M."/>
            <person name="Charles J.-F."/>
            <person name="Dassa E."/>
            <person name="Derose R."/>
            <person name="Derzelle S."/>
            <person name="Freyssinet G."/>
            <person name="Gaudriault S."/>
            <person name="Medigue C."/>
            <person name="Lanois A."/>
            <person name="Powell K."/>
            <person name="Siguier P."/>
            <person name="Vincent R."/>
            <person name="Wingate V."/>
            <person name="Zouine M."/>
            <person name="Glaser P."/>
            <person name="Boemare N."/>
            <person name="Danchin A."/>
            <person name="Kunst F."/>
        </authorList>
    </citation>
    <scope>NUCLEOTIDE SEQUENCE [LARGE SCALE GENOMIC DNA]</scope>
    <source>
        <strain>DSM 15139 / CIP 105565 / TT01</strain>
    </source>
</reference>
<sequence length="165" mass="18488">MKKLLCAASFGIALAFSVGAQAADKIAVVNVGEIFQQLPAREAVVKQLENEFKNRASELQRMETDLQSKIQKLQRDGSTMKSSERTNLEKEVMAKREEFAKKAQAFEQDHRRREMEERNKILSRIQDAIKVVAGKEGYDVVIDANAVAYSVSGKNITTSVLKQVK</sequence>
<keyword id="KW-0143">Chaperone</keyword>
<keyword id="KW-0574">Periplasm</keyword>
<keyword id="KW-1185">Reference proteome</keyword>
<keyword id="KW-0732">Signal</keyword>
<accession>Q7N8N8</accession>
<protein>
    <recommendedName>
        <fullName>Chaperone protein Skp</fullName>
    </recommendedName>
</protein>
<organism>
    <name type="scientific">Photorhabdus laumondii subsp. laumondii (strain DSM 15139 / CIP 105565 / TT01)</name>
    <name type="common">Photorhabdus luminescens subsp. laumondii</name>
    <dbReference type="NCBI Taxonomy" id="243265"/>
    <lineage>
        <taxon>Bacteria</taxon>
        <taxon>Pseudomonadati</taxon>
        <taxon>Pseudomonadota</taxon>
        <taxon>Gammaproteobacteria</taxon>
        <taxon>Enterobacterales</taxon>
        <taxon>Morganellaceae</taxon>
        <taxon>Photorhabdus</taxon>
    </lineage>
</organism>
<evidence type="ECO:0000250" key="1"/>
<evidence type="ECO:0000255" key="2"/>
<evidence type="ECO:0000305" key="3"/>
<dbReference type="EMBL" id="BX571861">
    <property type="protein sequence ID" value="CAE12976.1"/>
    <property type="molecule type" value="Genomic_DNA"/>
</dbReference>
<dbReference type="RefSeq" id="WP_011145057.1">
    <property type="nucleotide sequence ID" value="NC_005126.1"/>
</dbReference>
<dbReference type="SMR" id="Q7N8N8"/>
<dbReference type="STRING" id="243265.plu0681"/>
<dbReference type="GeneID" id="48846970"/>
<dbReference type="KEGG" id="plu:plu0681"/>
<dbReference type="eggNOG" id="COG2825">
    <property type="taxonomic scope" value="Bacteria"/>
</dbReference>
<dbReference type="HOGENOM" id="CLU_101388_2_0_6"/>
<dbReference type="OrthoDB" id="7061584at2"/>
<dbReference type="Proteomes" id="UP000002514">
    <property type="component" value="Chromosome"/>
</dbReference>
<dbReference type="GO" id="GO:0005829">
    <property type="term" value="C:cytosol"/>
    <property type="evidence" value="ECO:0007669"/>
    <property type="project" value="TreeGrafter"/>
</dbReference>
<dbReference type="GO" id="GO:0042597">
    <property type="term" value="C:periplasmic space"/>
    <property type="evidence" value="ECO:0007669"/>
    <property type="project" value="UniProtKB-SubCell"/>
</dbReference>
<dbReference type="GO" id="GO:0051082">
    <property type="term" value="F:unfolded protein binding"/>
    <property type="evidence" value="ECO:0007669"/>
    <property type="project" value="InterPro"/>
</dbReference>
<dbReference type="GO" id="GO:0061077">
    <property type="term" value="P:chaperone-mediated protein folding"/>
    <property type="evidence" value="ECO:0007669"/>
    <property type="project" value="TreeGrafter"/>
</dbReference>
<dbReference type="GO" id="GO:0050821">
    <property type="term" value="P:protein stabilization"/>
    <property type="evidence" value="ECO:0007669"/>
    <property type="project" value="TreeGrafter"/>
</dbReference>
<dbReference type="Gene3D" id="3.30.910.20">
    <property type="entry name" value="Skp domain"/>
    <property type="match status" value="1"/>
</dbReference>
<dbReference type="InterPro" id="IPR005632">
    <property type="entry name" value="Chaperone_Skp"/>
</dbReference>
<dbReference type="InterPro" id="IPR024930">
    <property type="entry name" value="Skp_dom_sf"/>
</dbReference>
<dbReference type="NCBIfam" id="NF008047">
    <property type="entry name" value="PRK10780.1"/>
    <property type="match status" value="1"/>
</dbReference>
<dbReference type="PANTHER" id="PTHR35089">
    <property type="entry name" value="CHAPERONE PROTEIN SKP"/>
    <property type="match status" value="1"/>
</dbReference>
<dbReference type="PANTHER" id="PTHR35089:SF1">
    <property type="entry name" value="CHAPERONE PROTEIN SKP"/>
    <property type="match status" value="1"/>
</dbReference>
<dbReference type="Pfam" id="PF03938">
    <property type="entry name" value="OmpH"/>
    <property type="match status" value="1"/>
</dbReference>
<dbReference type="PIRSF" id="PIRSF002094">
    <property type="entry name" value="OMP26_Skp"/>
    <property type="match status" value="1"/>
</dbReference>
<dbReference type="SMART" id="SM00935">
    <property type="entry name" value="OmpH"/>
    <property type="match status" value="1"/>
</dbReference>
<dbReference type="SUPFAM" id="SSF111384">
    <property type="entry name" value="OmpH-like"/>
    <property type="match status" value="1"/>
</dbReference>
<comment type="function">
    <text evidence="1">Molecular chaperone that interacts specifically with outer membrane proteins, thus maintaining the solubility of early folding intermediates during passage through the periplasm.</text>
</comment>
<comment type="subunit">
    <text evidence="1">Homotrimer.</text>
</comment>
<comment type="subcellular location">
    <subcellularLocation>
        <location evidence="1">Periplasm</location>
    </subcellularLocation>
</comment>
<comment type="similarity">
    <text evidence="3">Belongs to the Skp family.</text>
</comment>
<feature type="signal peptide" evidence="2">
    <location>
        <begin position="1"/>
        <end position="22"/>
    </location>
</feature>
<feature type="chain" id="PRO_0000227889" description="Chaperone protein Skp">
    <location>
        <begin position="23"/>
        <end position="165"/>
    </location>
</feature>
<feature type="region of interest" description="Lipopolysaccharide binding" evidence="2">
    <location>
        <begin position="102"/>
        <end position="113"/>
    </location>
</feature>
<name>SKP_PHOLL</name>